<gene>
    <name evidence="1" type="primary">ADISSP</name>
</gene>
<sequence>MAAANKGNKSRVRSIRFATSHDAESSQSHVHFDEKLHDSVVMVTQESDSSFLVKVGFLKILHRYEITFTLPPVHRLSKDVRETPVPSLHLKLLSVMPIPEGYSVKCEYSAHKEGVLKEEMLLACEGGSDTCVRVIVQARVMDRHHGTPMLLDGVRCVGAELEYDSEHSDWRGFD</sequence>
<reference key="1">
    <citation type="submission" date="2006-01" db="EMBL/GenBank/DDBJ databases">
        <authorList>
            <consortium name="NIH - Mammalian Gene Collection (MGC) project"/>
        </authorList>
    </citation>
    <scope>NUCLEOTIDE SEQUENCE [LARGE SCALE MRNA]</scope>
    <source>
        <strain>Hereford</strain>
        <tissue>Testis</tissue>
    </source>
</reference>
<feature type="initiator methionine" description="Removed" evidence="2">
    <location>
        <position position="1"/>
    </location>
</feature>
<feature type="chain" id="PRO_0000359753" description="Adipose-secreted signaling protein">
    <location>
        <begin position="2"/>
        <end position="174"/>
    </location>
</feature>
<feature type="modified residue" description="N-acetylalanine" evidence="2">
    <location>
        <position position="2"/>
    </location>
</feature>
<feature type="modified residue" description="Phosphothreonine" evidence="1">
    <location>
        <position position="147"/>
    </location>
</feature>
<proteinExistence type="evidence at transcript level"/>
<protein>
    <recommendedName>
        <fullName evidence="1">Adipose-secreted signaling protein</fullName>
    </recommendedName>
</protein>
<dbReference type="EMBL" id="BC112587">
    <property type="protein sequence ID" value="AAI12588.1"/>
    <property type="molecule type" value="mRNA"/>
</dbReference>
<dbReference type="RefSeq" id="NP_001039670.1">
    <property type="nucleotide sequence ID" value="NM_001046205.2"/>
</dbReference>
<dbReference type="RefSeq" id="XP_010809756.1">
    <property type="nucleotide sequence ID" value="XM_010811454.2"/>
</dbReference>
<dbReference type="RefSeq" id="XP_059748565.1">
    <property type="nucleotide sequence ID" value="XM_059892582.1"/>
</dbReference>
<dbReference type="RefSeq" id="XP_059748566.1">
    <property type="nucleotide sequence ID" value="XM_059892583.1"/>
</dbReference>
<dbReference type="FunCoup" id="Q2KIM1">
    <property type="interactions" value="2604"/>
</dbReference>
<dbReference type="PaxDb" id="9913-ENSBTAP00000024937"/>
<dbReference type="Ensembl" id="ENSBTAT00000024937.6">
    <property type="protein sequence ID" value="ENSBTAP00000024937.4"/>
    <property type="gene ID" value="ENSBTAG00000018735.6"/>
</dbReference>
<dbReference type="GeneID" id="515589"/>
<dbReference type="KEGG" id="bta:515589"/>
<dbReference type="CTD" id="54976"/>
<dbReference type="VEuPathDB" id="HostDB:ENSBTAG00000018735"/>
<dbReference type="VGNC" id="VGNC:49171">
    <property type="gene designation" value="ADISSP"/>
</dbReference>
<dbReference type="eggNOG" id="ENOG502RXJD">
    <property type="taxonomic scope" value="Eukaryota"/>
</dbReference>
<dbReference type="GeneTree" id="ENSGT00390000008711"/>
<dbReference type="HOGENOM" id="CLU_094626_2_0_1"/>
<dbReference type="InParanoid" id="Q2KIM1"/>
<dbReference type="OMA" id="GVRCIGM"/>
<dbReference type="OrthoDB" id="6246153at2759"/>
<dbReference type="TreeFam" id="TF323780"/>
<dbReference type="Proteomes" id="UP000009136">
    <property type="component" value="Chromosome 13"/>
</dbReference>
<dbReference type="Bgee" id="ENSBTAG00000018735">
    <property type="expression patterns" value="Expressed in temporal cortex and 105 other cell types or tissues"/>
</dbReference>
<dbReference type="GO" id="GO:0005615">
    <property type="term" value="C:extracellular space"/>
    <property type="evidence" value="ECO:0000250"/>
    <property type="project" value="UniProtKB"/>
</dbReference>
<dbReference type="GO" id="GO:0008157">
    <property type="term" value="F:protein phosphatase 1 binding"/>
    <property type="evidence" value="ECO:0007669"/>
    <property type="project" value="Ensembl"/>
</dbReference>
<dbReference type="GO" id="GO:1990845">
    <property type="term" value="P:adaptive thermogenesis"/>
    <property type="evidence" value="ECO:0000250"/>
    <property type="project" value="UniProtKB"/>
</dbReference>
<dbReference type="GO" id="GO:0042593">
    <property type="term" value="P:glucose homeostasis"/>
    <property type="evidence" value="ECO:0000250"/>
    <property type="project" value="UniProtKB"/>
</dbReference>
<dbReference type="GO" id="GO:1901224">
    <property type="term" value="P:positive regulation of non-canonical NF-kappaB signal transduction"/>
    <property type="evidence" value="ECO:0007669"/>
    <property type="project" value="Ensembl"/>
</dbReference>
<dbReference type="GO" id="GO:0010739">
    <property type="term" value="P:positive regulation of protein kinase A signaling"/>
    <property type="evidence" value="ECO:0000250"/>
    <property type="project" value="UniProtKB"/>
</dbReference>
<dbReference type="GO" id="GO:0030511">
    <property type="term" value="P:positive regulation of transforming growth factor beta receptor signaling pathway"/>
    <property type="evidence" value="ECO:0007669"/>
    <property type="project" value="Ensembl"/>
</dbReference>
<dbReference type="InterPro" id="IPR026794">
    <property type="entry name" value="ADISSP"/>
</dbReference>
<dbReference type="PANTHER" id="PTHR13287">
    <property type="entry name" value="ADIPOSE-SECRETED SIGNALING PROTEIN"/>
    <property type="match status" value="1"/>
</dbReference>
<dbReference type="PANTHER" id="PTHR13287:SF2">
    <property type="entry name" value="ADIPOSE-SECRETED SIGNALING PROTEIN"/>
    <property type="match status" value="1"/>
</dbReference>
<dbReference type="Pfam" id="PF15006">
    <property type="entry name" value="DUF4517"/>
    <property type="match status" value="1"/>
</dbReference>
<evidence type="ECO:0000250" key="1">
    <source>
        <dbReference type="UniProtKB" id="Q9D1K7"/>
    </source>
</evidence>
<evidence type="ECO:0000250" key="2">
    <source>
        <dbReference type="UniProtKB" id="Q9GZN8"/>
    </source>
</evidence>
<evidence type="ECO:0000305" key="3"/>
<accession>Q2KIM1</accession>
<comment type="function">
    <text evidence="1">Adipocyte-secreted protein (adipokine) that acts as a key regulator for white adipose tissue (WAT) thermogenesis and glucose homeostasis at least in part through activation of protein kinase A (PKA).</text>
</comment>
<comment type="subcellular location">
    <subcellularLocation>
        <location evidence="1">Secreted</location>
    </subcellularLocation>
</comment>
<comment type="similarity">
    <text evidence="3">Belongs to the ADISSP family.</text>
</comment>
<name>ADSSP_BOVIN</name>
<organism>
    <name type="scientific">Bos taurus</name>
    <name type="common">Bovine</name>
    <dbReference type="NCBI Taxonomy" id="9913"/>
    <lineage>
        <taxon>Eukaryota</taxon>
        <taxon>Metazoa</taxon>
        <taxon>Chordata</taxon>
        <taxon>Craniata</taxon>
        <taxon>Vertebrata</taxon>
        <taxon>Euteleostomi</taxon>
        <taxon>Mammalia</taxon>
        <taxon>Eutheria</taxon>
        <taxon>Laurasiatheria</taxon>
        <taxon>Artiodactyla</taxon>
        <taxon>Ruminantia</taxon>
        <taxon>Pecora</taxon>
        <taxon>Bovidae</taxon>
        <taxon>Bovinae</taxon>
        <taxon>Bos</taxon>
    </lineage>
</organism>
<keyword id="KW-0007">Acetylation</keyword>
<keyword id="KW-0597">Phosphoprotein</keyword>
<keyword id="KW-1185">Reference proteome</keyword>
<keyword id="KW-0964">Secreted</keyword>